<keyword id="KW-0002">3D-structure</keyword>
<keyword id="KW-0903">Direct protein sequencing</keyword>
<keyword id="KW-1185">Reference proteome</keyword>
<keyword id="KW-0687">Ribonucleoprotein</keyword>
<keyword id="KW-0689">Ribosomal protein</keyword>
<keyword id="KW-0694">RNA-binding</keyword>
<keyword id="KW-0699">rRNA-binding</keyword>
<accession>Q5SHZ1</accession>
<protein>
    <recommendedName>
        <fullName evidence="5">Large ribosomal subunit protein bL25</fullName>
    </recommendedName>
    <alternativeName>
        <fullName>50S ribosomal protein L25</fullName>
        <shortName evidence="4">TL7</shortName>
    </alternativeName>
</protein>
<comment type="function">
    <text evidence="3">This is one of 3 proteins that mediate the attachment of the 5S rRNA onto the large ribosomal subunit.</text>
</comment>
<comment type="subunit">
    <text evidence="3">Part of the 50S ribosomal subunit. Contacts the 5S rRNA; has been isolated in a complex with 5S rRNA and uL5, 5S rRNA and DNA binding protein II; 5S rRNA and uL18; 5S rRNA, uL5 and DNA binding protein II (Ref.4).</text>
</comment>
<comment type="mass spectrometry"/>
<comment type="similarity">
    <text evidence="5">Belongs to the bacterial ribosomal protein bL25 family. CTC subfamily.</text>
</comment>
<dbReference type="EMBL" id="AP008226">
    <property type="protein sequence ID" value="BAD71412.1"/>
    <property type="molecule type" value="Genomic_DNA"/>
</dbReference>
<dbReference type="RefSeq" id="WP_011173631.1">
    <property type="nucleotide sequence ID" value="NC_006461.1"/>
</dbReference>
<dbReference type="RefSeq" id="YP_144855.1">
    <property type="nucleotide sequence ID" value="NC_006461.1"/>
</dbReference>
<dbReference type="PDB" id="1VVJ">
    <property type="method" value="X-ray"/>
    <property type="resolution" value="3.44 A"/>
    <property type="chains" value="RZ/YZ=1-206"/>
</dbReference>
<dbReference type="PDB" id="1VY4">
    <property type="method" value="X-ray"/>
    <property type="resolution" value="2.60 A"/>
    <property type="chains" value="BZ/DZ=1-206"/>
</dbReference>
<dbReference type="PDB" id="1VY5">
    <property type="method" value="X-ray"/>
    <property type="resolution" value="2.55 A"/>
    <property type="chains" value="BZ/DZ=1-206"/>
</dbReference>
<dbReference type="PDB" id="1VY6">
    <property type="method" value="X-ray"/>
    <property type="resolution" value="2.90 A"/>
    <property type="chains" value="BZ/DZ=1-206"/>
</dbReference>
<dbReference type="PDB" id="1VY7">
    <property type="method" value="X-ray"/>
    <property type="resolution" value="2.80 A"/>
    <property type="chains" value="BZ/DZ=1-206"/>
</dbReference>
<dbReference type="PDB" id="4L47">
    <property type="method" value="X-ray"/>
    <property type="resolution" value="3.22 A"/>
    <property type="chains" value="RZ/YZ=1-206"/>
</dbReference>
<dbReference type="PDB" id="4L71">
    <property type="method" value="X-ray"/>
    <property type="resolution" value="3.90 A"/>
    <property type="chains" value="RZ/YZ=1-206"/>
</dbReference>
<dbReference type="PDB" id="4LEL">
    <property type="method" value="X-ray"/>
    <property type="resolution" value="3.90 A"/>
    <property type="chains" value="RZ/YZ=1-206"/>
</dbReference>
<dbReference type="PDB" id="4LFZ">
    <property type="method" value="X-ray"/>
    <property type="resolution" value="3.92 A"/>
    <property type="chains" value="RZ/YZ=1-206"/>
</dbReference>
<dbReference type="PDB" id="4LNT">
    <property type="method" value="X-ray"/>
    <property type="resolution" value="2.94 A"/>
    <property type="chains" value="RZ/YZ=1-206"/>
</dbReference>
<dbReference type="PDB" id="4LSK">
    <property type="method" value="X-ray"/>
    <property type="resolution" value="3.48 A"/>
    <property type="chains" value="RZ/YZ=1-206"/>
</dbReference>
<dbReference type="PDB" id="4LT8">
    <property type="method" value="X-ray"/>
    <property type="resolution" value="3.14 A"/>
    <property type="chains" value="RZ/YZ=1-206"/>
</dbReference>
<dbReference type="PDB" id="4P6F">
    <property type="method" value="X-ray"/>
    <property type="resolution" value="3.60 A"/>
    <property type="chains" value="RZ/YZ=1-206"/>
</dbReference>
<dbReference type="PDB" id="4P70">
    <property type="method" value="X-ray"/>
    <property type="resolution" value="3.68 A"/>
    <property type="chains" value="RZ/YZ=1-206"/>
</dbReference>
<dbReference type="PDB" id="4TUA">
    <property type="method" value="X-ray"/>
    <property type="resolution" value="3.60 A"/>
    <property type="chains" value="RZ/YZ=1-206"/>
</dbReference>
<dbReference type="PDB" id="4TUB">
    <property type="method" value="X-ray"/>
    <property type="resolution" value="3.60 A"/>
    <property type="chains" value="RZ/YZ=1-206"/>
</dbReference>
<dbReference type="PDB" id="4TUC">
    <property type="method" value="X-ray"/>
    <property type="resolution" value="3.60 A"/>
    <property type="chains" value="RZ/YZ=1-206"/>
</dbReference>
<dbReference type="PDB" id="4TUD">
    <property type="method" value="X-ray"/>
    <property type="resolution" value="3.60 A"/>
    <property type="chains" value="RZ/YZ=1-206"/>
</dbReference>
<dbReference type="PDB" id="4TUE">
    <property type="method" value="X-ray"/>
    <property type="resolution" value="3.50 A"/>
    <property type="chains" value="RZ/YZ=1-206"/>
</dbReference>
<dbReference type="PDB" id="4V42">
    <property type="method" value="X-ray"/>
    <property type="resolution" value="5.50 A"/>
    <property type="chains" value="V=1-206"/>
</dbReference>
<dbReference type="PDB" id="4V4X">
    <property type="method" value="X-ray"/>
    <property type="resolution" value="5.00 A"/>
    <property type="chains" value="BY=1-206"/>
</dbReference>
<dbReference type="PDB" id="4V4Y">
    <property type="method" value="X-ray"/>
    <property type="resolution" value="5.50 A"/>
    <property type="chains" value="BY=1-206"/>
</dbReference>
<dbReference type="PDB" id="4V4Z">
    <property type="method" value="X-ray"/>
    <property type="resolution" value="4.51 A"/>
    <property type="chains" value="BY=1-206"/>
</dbReference>
<dbReference type="PDB" id="4V51">
    <property type="method" value="X-ray"/>
    <property type="resolution" value="2.80 A"/>
    <property type="chains" value="BZ/DZ=1-206"/>
</dbReference>
<dbReference type="PDB" id="4V5A">
    <property type="method" value="X-ray"/>
    <property type="resolution" value="3.50 A"/>
    <property type="chains" value="BZ/DZ=1-206"/>
</dbReference>
<dbReference type="PDB" id="4V5C">
    <property type="method" value="X-ray"/>
    <property type="resolution" value="3.30 A"/>
    <property type="chains" value="BZ/DZ=1-206"/>
</dbReference>
<dbReference type="PDB" id="4V5D">
    <property type="method" value="X-ray"/>
    <property type="resolution" value="3.50 A"/>
    <property type="chains" value="BZ/DZ=1-206"/>
</dbReference>
<dbReference type="PDB" id="4V5E">
    <property type="method" value="X-ray"/>
    <property type="resolution" value="3.45 A"/>
    <property type="chains" value="BZ/DZ=1-206"/>
</dbReference>
<dbReference type="PDB" id="4V5F">
    <property type="method" value="X-ray"/>
    <property type="resolution" value="3.60 A"/>
    <property type="chains" value="BZ/DZ=1-206"/>
</dbReference>
<dbReference type="PDB" id="4V5G">
    <property type="method" value="X-ray"/>
    <property type="resolution" value="3.60 A"/>
    <property type="chains" value="BZ/DZ=1-206"/>
</dbReference>
<dbReference type="PDB" id="4V5J">
    <property type="method" value="X-ray"/>
    <property type="resolution" value="3.10 A"/>
    <property type="chains" value="BZ/DZ=1-206"/>
</dbReference>
<dbReference type="PDB" id="4V5K">
    <property type="method" value="X-ray"/>
    <property type="resolution" value="3.20 A"/>
    <property type="chains" value="BZ/DZ=1-206"/>
</dbReference>
<dbReference type="PDB" id="4V5L">
    <property type="method" value="X-ray"/>
    <property type="resolution" value="3.10 A"/>
    <property type="chains" value="BZ=1-206"/>
</dbReference>
<dbReference type="PDB" id="4V5M">
    <property type="method" value="EM"/>
    <property type="resolution" value="7.80 A"/>
    <property type="chains" value="BZ=1-206"/>
</dbReference>
<dbReference type="PDB" id="4V5N">
    <property type="method" value="EM"/>
    <property type="resolution" value="7.60 A"/>
    <property type="chains" value="BZ=1-206"/>
</dbReference>
<dbReference type="PDB" id="4V5P">
    <property type="method" value="X-ray"/>
    <property type="resolution" value="3.10 A"/>
    <property type="chains" value="BZ/DZ=1-206"/>
</dbReference>
<dbReference type="PDB" id="4V5Q">
    <property type="method" value="X-ray"/>
    <property type="resolution" value="3.10 A"/>
    <property type="chains" value="BZ/DZ=1-206"/>
</dbReference>
<dbReference type="PDB" id="4V5R">
    <property type="method" value="X-ray"/>
    <property type="resolution" value="3.10 A"/>
    <property type="chains" value="BZ/DZ=1-206"/>
</dbReference>
<dbReference type="PDB" id="4V5S">
    <property type="method" value="X-ray"/>
    <property type="resolution" value="3.10 A"/>
    <property type="chains" value="BZ/DZ=1-206"/>
</dbReference>
<dbReference type="PDB" id="4V68">
    <property type="method" value="EM"/>
    <property type="resolution" value="6.40 A"/>
    <property type="chains" value="BZ=3-179"/>
</dbReference>
<dbReference type="PDB" id="4V6A">
    <property type="method" value="X-ray"/>
    <property type="resolution" value="3.10 A"/>
    <property type="chains" value="BZ/DZ=1-206"/>
</dbReference>
<dbReference type="PDB" id="4V6F">
    <property type="method" value="X-ray"/>
    <property type="resolution" value="3.10 A"/>
    <property type="chains" value="AV/DV=1-206"/>
</dbReference>
<dbReference type="PDB" id="4V6G">
    <property type="method" value="X-ray"/>
    <property type="resolution" value="3.50 A"/>
    <property type="chains" value="BV/DV=1-206"/>
</dbReference>
<dbReference type="PDB" id="4V7J">
    <property type="method" value="X-ray"/>
    <property type="resolution" value="3.30 A"/>
    <property type="chains" value="AZ/BZ=1-206"/>
</dbReference>
<dbReference type="PDB" id="4V7K">
    <property type="method" value="X-ray"/>
    <property type="resolution" value="3.60 A"/>
    <property type="chains" value="AZ/BZ=1-206"/>
</dbReference>
<dbReference type="PDB" id="4V7L">
    <property type="method" value="X-ray"/>
    <property type="resolution" value="3.00 A"/>
    <property type="chains" value="BZ/DZ=1-206"/>
</dbReference>
<dbReference type="PDB" id="4V7M">
    <property type="method" value="X-ray"/>
    <property type="resolution" value="3.45 A"/>
    <property type="chains" value="BZ/DZ=1-206"/>
</dbReference>
<dbReference type="PDB" id="4V7W">
    <property type="method" value="X-ray"/>
    <property type="resolution" value="3.00 A"/>
    <property type="chains" value="BZ/DZ=1-206"/>
</dbReference>
<dbReference type="PDB" id="4V7X">
    <property type="method" value="X-ray"/>
    <property type="resolution" value="3.00 A"/>
    <property type="chains" value="BZ/DZ=1-206"/>
</dbReference>
<dbReference type="PDB" id="4V7Y">
    <property type="method" value="X-ray"/>
    <property type="resolution" value="3.00 A"/>
    <property type="chains" value="BZ/DZ=1-206"/>
</dbReference>
<dbReference type="PDB" id="4V7Z">
    <property type="method" value="X-ray"/>
    <property type="resolution" value="3.10 A"/>
    <property type="chains" value="BZ/DZ=1-206"/>
</dbReference>
<dbReference type="PDB" id="4V87">
    <property type="method" value="X-ray"/>
    <property type="resolution" value="3.10 A"/>
    <property type="chains" value="AV/DV=1-179"/>
</dbReference>
<dbReference type="PDB" id="4V8A">
    <property type="method" value="X-ray"/>
    <property type="resolution" value="3.20 A"/>
    <property type="chains" value="AZ/BZ=1-206"/>
</dbReference>
<dbReference type="PDB" id="4V8B">
    <property type="method" value="X-ray"/>
    <property type="resolution" value="3.00 A"/>
    <property type="chains" value="BV/DV=1-206"/>
</dbReference>
<dbReference type="PDB" id="4V8C">
    <property type="method" value="X-ray"/>
    <property type="resolution" value="3.30 A"/>
    <property type="chains" value="AV/BV=1-206"/>
</dbReference>
<dbReference type="PDB" id="4V8D">
    <property type="method" value="X-ray"/>
    <property type="resolution" value="3.00 A"/>
    <property type="chains" value="BV/DV=1-206"/>
</dbReference>
<dbReference type="PDB" id="4V8E">
    <property type="method" value="X-ray"/>
    <property type="resolution" value="3.30 A"/>
    <property type="chains" value="AV/CV=1-206"/>
</dbReference>
<dbReference type="PDB" id="4V8F">
    <property type="method" value="X-ray"/>
    <property type="resolution" value="3.30 A"/>
    <property type="chains" value="AV/DV=1-206"/>
</dbReference>
<dbReference type="PDB" id="4V8G">
    <property type="method" value="X-ray"/>
    <property type="resolution" value="3.00 A"/>
    <property type="chains" value="BZ/DZ=1-206"/>
</dbReference>
<dbReference type="PDB" id="4V8H">
    <property type="method" value="X-ray"/>
    <property type="resolution" value="3.10 A"/>
    <property type="chains" value="BZ/DZ=1-206"/>
</dbReference>
<dbReference type="PDB" id="4V8I">
    <property type="method" value="X-ray"/>
    <property type="resolution" value="2.70 A"/>
    <property type="chains" value="BZ/DZ=1-206"/>
</dbReference>
<dbReference type="PDB" id="4V8J">
    <property type="method" value="X-ray"/>
    <property type="resolution" value="3.90 A"/>
    <property type="chains" value="BZ/DZ=1-206"/>
</dbReference>
<dbReference type="PDB" id="4V8N">
    <property type="method" value="X-ray"/>
    <property type="resolution" value="3.10 A"/>
    <property type="chains" value="BZ/DZ=1-206"/>
</dbReference>
<dbReference type="PDB" id="4V8O">
    <property type="method" value="X-ray"/>
    <property type="resolution" value="3.80 A"/>
    <property type="chains" value="BZ=1-206"/>
</dbReference>
<dbReference type="PDB" id="4V8Q">
    <property type="method" value="X-ray"/>
    <property type="resolution" value="3.10 A"/>
    <property type="chains" value="AZ=1-206"/>
</dbReference>
<dbReference type="PDB" id="4V8U">
    <property type="method" value="X-ray"/>
    <property type="resolution" value="3.70 A"/>
    <property type="chains" value="BZ/DZ=1-206"/>
</dbReference>
<dbReference type="PDB" id="4V8X">
    <property type="method" value="X-ray"/>
    <property type="resolution" value="3.35 A"/>
    <property type="chains" value="BZ/DZ=1-206"/>
</dbReference>
<dbReference type="PDB" id="4V90">
    <property type="method" value="X-ray"/>
    <property type="resolution" value="2.95 A"/>
    <property type="chains" value="BZ=2-206"/>
</dbReference>
<dbReference type="PDB" id="4V95">
    <property type="method" value="X-ray"/>
    <property type="resolution" value="3.20 A"/>
    <property type="chains" value="BZ/DZ=1-206"/>
</dbReference>
<dbReference type="PDB" id="4V97">
    <property type="method" value="X-ray"/>
    <property type="resolution" value="3.52 A"/>
    <property type="chains" value="BZ/DZ=1-206"/>
</dbReference>
<dbReference type="PDB" id="4V9A">
    <property type="method" value="X-ray"/>
    <property type="resolution" value="3.30 A"/>
    <property type="chains" value="BV/DV=1-206"/>
</dbReference>
<dbReference type="PDB" id="4V9B">
    <property type="method" value="X-ray"/>
    <property type="resolution" value="3.10 A"/>
    <property type="chains" value="BV/DV=1-206"/>
</dbReference>
<dbReference type="PDB" id="4V9H">
    <property type="method" value="X-ray"/>
    <property type="resolution" value="2.86 A"/>
    <property type="chains" value="BZ=1-206"/>
</dbReference>
<dbReference type="PDB" id="4V9I">
    <property type="method" value="X-ray"/>
    <property type="resolution" value="3.30 A"/>
    <property type="chains" value="BZ/DZ=3-178"/>
</dbReference>
<dbReference type="PDB" id="4V9R">
    <property type="method" value="X-ray"/>
    <property type="resolution" value="3.00 A"/>
    <property type="chains" value="BZ/DZ=1-206"/>
</dbReference>
<dbReference type="PDB" id="4V9S">
    <property type="method" value="X-ray"/>
    <property type="resolution" value="3.10 A"/>
    <property type="chains" value="BZ/DZ=1-206"/>
</dbReference>
<dbReference type="PDB" id="4W2E">
    <property type="method" value="X-ray"/>
    <property type="resolution" value="2.90 A"/>
    <property type="chains" value="Z=1-206"/>
</dbReference>
<dbReference type="PDB" id="4W2F">
    <property type="method" value="X-ray"/>
    <property type="resolution" value="2.40 A"/>
    <property type="chains" value="BZ/DZ=1-206"/>
</dbReference>
<dbReference type="PDB" id="4W2G">
    <property type="method" value="X-ray"/>
    <property type="resolution" value="2.55 A"/>
    <property type="chains" value="BZ/DZ=1-206"/>
</dbReference>
<dbReference type="PDB" id="4W2H">
    <property type="method" value="X-ray"/>
    <property type="resolution" value="2.70 A"/>
    <property type="chains" value="BZ/DZ=1-206"/>
</dbReference>
<dbReference type="PDB" id="4W2I">
    <property type="method" value="X-ray"/>
    <property type="resolution" value="2.70 A"/>
    <property type="chains" value="BZ/DZ=1-206"/>
</dbReference>
<dbReference type="PDB" id="4W4G">
    <property type="method" value="X-ray"/>
    <property type="resolution" value="3.30 A"/>
    <property type="chains" value="RZ/YZ=1-206"/>
</dbReference>
<dbReference type="PDB" id="4WPO">
    <property type="method" value="X-ray"/>
    <property type="resolution" value="2.80 A"/>
    <property type="chains" value="AZ/CZ=1-206"/>
</dbReference>
<dbReference type="PDB" id="4WQ1">
    <property type="method" value="X-ray"/>
    <property type="resolution" value="3.10 A"/>
    <property type="chains" value="D5=1-206, H8=1-175"/>
</dbReference>
<dbReference type="PDB" id="4WQF">
    <property type="method" value="X-ray"/>
    <property type="resolution" value="2.80 A"/>
    <property type="chains" value="AZ/CZ=1-206"/>
</dbReference>
<dbReference type="PDB" id="4WQR">
    <property type="method" value="X-ray"/>
    <property type="resolution" value="3.15 A"/>
    <property type="chains" value="D5/H8=1-206"/>
</dbReference>
<dbReference type="PDB" id="4WQU">
    <property type="method" value="X-ray"/>
    <property type="resolution" value="2.80 A"/>
    <property type="chains" value="AZ/CZ=1-206"/>
</dbReference>
<dbReference type="PDB" id="4WQY">
    <property type="method" value="X-ray"/>
    <property type="resolution" value="2.80 A"/>
    <property type="chains" value="AZ/CZ=1-206"/>
</dbReference>
<dbReference type="PDB" id="4WR6">
    <property type="method" value="X-ray"/>
    <property type="resolution" value="3.05 A"/>
    <property type="chains" value="D5/H8=1-206"/>
</dbReference>
<dbReference type="PDB" id="4WRA">
    <property type="method" value="X-ray"/>
    <property type="resolution" value="3.05 A"/>
    <property type="chains" value="D5/H8=1-206"/>
</dbReference>
<dbReference type="PDB" id="4WRO">
    <property type="method" value="X-ray"/>
    <property type="resolution" value="3.05 A"/>
    <property type="chains" value="H8=1-206"/>
</dbReference>
<dbReference type="PDB" id="4WSD">
    <property type="method" value="X-ray"/>
    <property type="resolution" value="2.95 A"/>
    <property type="chains" value="D5/H8=1-206"/>
</dbReference>
<dbReference type="PDB" id="4WSM">
    <property type="method" value="X-ray"/>
    <property type="resolution" value="3.30 A"/>
    <property type="chains" value="D5/H8=1-206"/>
</dbReference>
<dbReference type="PDB" id="4WT1">
    <property type="method" value="X-ray"/>
    <property type="resolution" value="3.05 A"/>
    <property type="chains" value="D5/H8=1-206"/>
</dbReference>
<dbReference type="PDB" id="4WT8">
    <property type="method" value="X-ray"/>
    <property type="resolution" value="3.40 A"/>
    <property type="chains" value="CZ/DZ=3-178"/>
</dbReference>
<dbReference type="PDB" id="4WU1">
    <property type="method" value="X-ray"/>
    <property type="resolution" value="3.20 A"/>
    <property type="chains" value="D5/H8=1-206"/>
</dbReference>
<dbReference type="PDB" id="4WZD">
    <property type="method" value="X-ray"/>
    <property type="resolution" value="3.10 A"/>
    <property type="chains" value="D5/H8=1-206"/>
</dbReference>
<dbReference type="PDB" id="4WZO">
    <property type="method" value="X-ray"/>
    <property type="resolution" value="3.30 A"/>
    <property type="chains" value="D5/H8=1-206"/>
</dbReference>
<dbReference type="PDB" id="4Y4O">
    <property type="method" value="X-ray"/>
    <property type="resolution" value="2.30 A"/>
    <property type="chains" value="1Z/2Z=1-206"/>
</dbReference>
<dbReference type="PDB" id="4Y4P">
    <property type="method" value="X-ray"/>
    <property type="resolution" value="2.50 A"/>
    <property type="chains" value="1Z/2Z=1-206"/>
</dbReference>
<dbReference type="PDB" id="4YPB">
    <property type="method" value="X-ray"/>
    <property type="resolution" value="3.40 A"/>
    <property type="chains" value="RZ/YZ=1-206"/>
</dbReference>
<dbReference type="PDB" id="4YZV">
    <property type="method" value="X-ray"/>
    <property type="resolution" value="3.10 A"/>
    <property type="chains" value="RZ/YZ=1-206"/>
</dbReference>
<dbReference type="PDB" id="4Z3S">
    <property type="method" value="X-ray"/>
    <property type="resolution" value="2.65 A"/>
    <property type="chains" value="1Z/2Z=1-206"/>
</dbReference>
<dbReference type="PDB" id="4Z8C">
    <property type="method" value="X-ray"/>
    <property type="resolution" value="2.90 A"/>
    <property type="chains" value="1Z/2Z=1-206"/>
</dbReference>
<dbReference type="PDB" id="4ZER">
    <property type="method" value="X-ray"/>
    <property type="resolution" value="3.10 A"/>
    <property type="chains" value="1Z/2Z=1-203"/>
</dbReference>
<dbReference type="PDB" id="4ZSN">
    <property type="method" value="X-ray"/>
    <property type="resolution" value="3.60 A"/>
    <property type="chains" value="RZ/YZ=1-206"/>
</dbReference>
<dbReference type="PDB" id="5A9Z">
    <property type="method" value="EM"/>
    <property type="resolution" value="4.70 A"/>
    <property type="chains" value="AW=1-180"/>
</dbReference>
<dbReference type="PDB" id="5AA0">
    <property type="method" value="EM"/>
    <property type="resolution" value="5.00 A"/>
    <property type="chains" value="AW=1-180"/>
</dbReference>
<dbReference type="PDB" id="5CZP">
    <property type="method" value="X-ray"/>
    <property type="resolution" value="3.30 A"/>
    <property type="chains" value="RZ/YZ=1-206"/>
</dbReference>
<dbReference type="PDB" id="5D8B">
    <property type="method" value="X-ray"/>
    <property type="resolution" value="3.63 A"/>
    <property type="chains" value="PB/T=1-206"/>
</dbReference>
<dbReference type="PDB" id="5DFE">
    <property type="method" value="X-ray"/>
    <property type="resolution" value="3.10 A"/>
    <property type="chains" value="RZ/YZ=1-206"/>
</dbReference>
<dbReference type="PDB" id="5DOX">
    <property type="method" value="X-ray"/>
    <property type="resolution" value="3.10 A"/>
    <property type="chains" value="1Z/2Z=1-206"/>
</dbReference>
<dbReference type="PDB" id="5DOY">
    <property type="method" value="X-ray"/>
    <property type="resolution" value="2.60 A"/>
    <property type="chains" value="1Z/2Z=1-206"/>
</dbReference>
<dbReference type="PDB" id="5E7K">
    <property type="method" value="X-ray"/>
    <property type="resolution" value="3.20 A"/>
    <property type="chains" value="D5/H8=1-206"/>
</dbReference>
<dbReference type="PDB" id="5E81">
    <property type="method" value="X-ray"/>
    <property type="resolution" value="2.95 A"/>
    <property type="chains" value="D5/H8=1-206"/>
</dbReference>
<dbReference type="PDB" id="5EL4">
    <property type="method" value="X-ray"/>
    <property type="resolution" value="3.15 A"/>
    <property type="chains" value="D5/H8=1-206"/>
</dbReference>
<dbReference type="PDB" id="5EL5">
    <property type="method" value="X-ray"/>
    <property type="resolution" value="3.15 A"/>
    <property type="chains" value="D5/H8=1-206"/>
</dbReference>
<dbReference type="PDB" id="5EL6">
    <property type="method" value="X-ray"/>
    <property type="resolution" value="3.10 A"/>
    <property type="chains" value="D5/H8=1-206"/>
</dbReference>
<dbReference type="PDB" id="5EL7">
    <property type="method" value="X-ray"/>
    <property type="resolution" value="3.15 A"/>
    <property type="chains" value="D5/H8=1-206"/>
</dbReference>
<dbReference type="PDB" id="5F8K">
    <property type="method" value="X-ray"/>
    <property type="resolution" value="2.80 A"/>
    <property type="chains" value="1Z/2Z=1-203"/>
</dbReference>
<dbReference type="PDB" id="5FDU">
    <property type="method" value="X-ray"/>
    <property type="resolution" value="2.90 A"/>
    <property type="chains" value="1Z/2Z=1-203"/>
</dbReference>
<dbReference type="PDB" id="5FDV">
    <property type="method" value="X-ray"/>
    <property type="resolution" value="2.80 A"/>
    <property type="chains" value="1Z/2Z=1-203"/>
</dbReference>
<dbReference type="PDB" id="5HAU">
    <property type="method" value="X-ray"/>
    <property type="resolution" value="3.00 A"/>
    <property type="chains" value="1X/2X=1-206"/>
</dbReference>
<dbReference type="PDB" id="5HCP">
    <property type="method" value="X-ray"/>
    <property type="resolution" value="2.89 A"/>
    <property type="chains" value="1Z/2Z=1-206"/>
</dbReference>
<dbReference type="PDB" id="5HCQ">
    <property type="method" value="X-ray"/>
    <property type="resolution" value="2.80 A"/>
    <property type="chains" value="1Z/2Z=1-206"/>
</dbReference>
<dbReference type="PDB" id="5HCR">
    <property type="method" value="X-ray"/>
    <property type="resolution" value="2.80 A"/>
    <property type="chains" value="1Z/2Z=1-206"/>
</dbReference>
<dbReference type="PDB" id="5HD1">
    <property type="method" value="X-ray"/>
    <property type="resolution" value="2.70 A"/>
    <property type="chains" value="1Z/2Z=1-206"/>
</dbReference>
<dbReference type="PDB" id="5IB7">
    <property type="method" value="X-ray"/>
    <property type="resolution" value="2.99 A"/>
    <property type="chains" value="D5/H8=1-206"/>
</dbReference>
<dbReference type="PDB" id="5IB8">
    <property type="method" value="X-ray"/>
    <property type="resolution" value="3.13 A"/>
    <property type="chains" value="D5/H8=1-206"/>
</dbReference>
<dbReference type="PDB" id="5IBB">
    <property type="method" value="X-ray"/>
    <property type="resolution" value="2.96 A"/>
    <property type="chains" value="D5/H8=1-206"/>
</dbReference>
<dbReference type="PDB" id="5IMQ">
    <property type="method" value="EM"/>
    <property type="resolution" value="3.80 A"/>
    <property type="chains" value="r=1-206"/>
</dbReference>
<dbReference type="PDB" id="5IMR">
    <property type="method" value="EM"/>
    <property type="chains" value="r=1-206"/>
</dbReference>
<dbReference type="PDB" id="5J30">
    <property type="method" value="X-ray"/>
    <property type="resolution" value="3.20 A"/>
    <property type="chains" value="RZ/YZ=1-206"/>
</dbReference>
<dbReference type="PDB" id="5J3C">
    <property type="method" value="X-ray"/>
    <property type="resolution" value="3.04 A"/>
    <property type="chains" value="RZ/YZ=1-206"/>
</dbReference>
<dbReference type="PDB" id="5J4B">
    <property type="method" value="X-ray"/>
    <property type="resolution" value="2.60 A"/>
    <property type="chains" value="1Z/2Z=1-206"/>
</dbReference>
<dbReference type="PDB" id="5J4C">
    <property type="method" value="X-ray"/>
    <property type="resolution" value="2.80 A"/>
    <property type="chains" value="1Z/2Z=1-206"/>
</dbReference>
<dbReference type="PDB" id="5J8B">
    <property type="method" value="X-ray"/>
    <property type="resolution" value="2.60 A"/>
    <property type="chains" value="Z=1-206"/>
</dbReference>
<dbReference type="PDB" id="5NDJ">
    <property type="method" value="X-ray"/>
    <property type="resolution" value="3.15 A"/>
    <property type="chains" value="D5/H8=1-206"/>
</dbReference>
<dbReference type="PDB" id="5NDK">
    <property type="method" value="X-ray"/>
    <property type="resolution" value="2.95 A"/>
    <property type="chains" value="D5/H8=1-206"/>
</dbReference>
<dbReference type="PDB" id="5OT7">
    <property type="method" value="EM"/>
    <property type="resolution" value="3.80 A"/>
    <property type="chains" value="6=3-180"/>
</dbReference>
<dbReference type="PDB" id="5UQ7">
    <property type="method" value="EM"/>
    <property type="resolution" value="3.50 A"/>
    <property type="chains" value="Z=1-187"/>
</dbReference>
<dbReference type="PDB" id="5UQ8">
    <property type="method" value="EM"/>
    <property type="resolution" value="3.20 A"/>
    <property type="chains" value="Z=1-187"/>
</dbReference>
<dbReference type="PDB" id="5VP2">
    <property type="method" value="X-ray"/>
    <property type="resolution" value="2.80 A"/>
    <property type="chains" value="1Z/2Z=1-206"/>
</dbReference>
<dbReference type="PDB" id="5VPO">
    <property type="method" value="X-ray"/>
    <property type="resolution" value="3.34 A"/>
    <property type="chains" value="RZ/YZ=1-206"/>
</dbReference>
<dbReference type="PDB" id="5VPP">
    <property type="method" value="X-ray"/>
    <property type="resolution" value="3.90 A"/>
    <property type="chains" value="RZ/YZ=1-206"/>
</dbReference>
<dbReference type="PDB" id="5W4K">
    <property type="method" value="X-ray"/>
    <property type="resolution" value="2.70 A"/>
    <property type="chains" value="1Z/2Z=1-206"/>
</dbReference>
<dbReference type="PDB" id="5WIS">
    <property type="method" value="X-ray"/>
    <property type="resolution" value="2.70 A"/>
    <property type="chains" value="1Z/2Z=1-206"/>
</dbReference>
<dbReference type="PDB" id="5WIT">
    <property type="method" value="X-ray"/>
    <property type="resolution" value="2.60 A"/>
    <property type="chains" value="1Z/2Z=1-206"/>
</dbReference>
<dbReference type="PDB" id="5ZLU">
    <property type="method" value="EM"/>
    <property type="resolution" value="3.60 A"/>
    <property type="chains" value="s=1-206"/>
</dbReference>
<dbReference type="PDB" id="6BUW">
    <property type="method" value="X-ray"/>
    <property type="resolution" value="3.50 A"/>
    <property type="chains" value="RZ/YZ=1-206"/>
</dbReference>
<dbReference type="PDB" id="6BZ6">
    <property type="method" value="X-ray"/>
    <property type="resolution" value="3.18 A"/>
    <property type="chains" value="RZ/YZ=1-206"/>
</dbReference>
<dbReference type="PDB" id="6BZ7">
    <property type="method" value="X-ray"/>
    <property type="resolution" value="3.68 A"/>
    <property type="chains" value="RZ/YZ=1-206"/>
</dbReference>
<dbReference type="PDB" id="6BZ8">
    <property type="method" value="X-ray"/>
    <property type="resolution" value="3.74 A"/>
    <property type="chains" value="RZ/YZ=1-206"/>
</dbReference>
<dbReference type="PDB" id="6C5L">
    <property type="method" value="X-ray"/>
    <property type="resolution" value="3.20 A"/>
    <property type="chains" value="BZ/DZ=1-206"/>
</dbReference>
<dbReference type="PDB" id="6CAE">
    <property type="method" value="X-ray"/>
    <property type="resolution" value="2.60 A"/>
    <property type="chains" value="1Z/2Z=1-206"/>
</dbReference>
<dbReference type="PDB" id="6CFJ">
    <property type="method" value="X-ray"/>
    <property type="resolution" value="2.80 A"/>
    <property type="chains" value="1Z/2Z=1-206"/>
</dbReference>
<dbReference type="PDB" id="6CFK">
    <property type="method" value="X-ray"/>
    <property type="resolution" value="2.70 A"/>
    <property type="chains" value="1Z/2Z=1-206"/>
</dbReference>
<dbReference type="PDB" id="6CFL">
    <property type="method" value="X-ray"/>
    <property type="resolution" value="2.60 A"/>
    <property type="chains" value="1Z/2Z=1-206"/>
</dbReference>
<dbReference type="PDB" id="6CZR">
    <property type="method" value="X-ray"/>
    <property type="resolution" value="3.14 A"/>
    <property type="chains" value="1Z/2Z=1-203"/>
</dbReference>
<dbReference type="PDB" id="6FKR">
    <property type="method" value="X-ray"/>
    <property type="resolution" value="3.20 A"/>
    <property type="chains" value="1Z/2Z=1-203"/>
</dbReference>
<dbReference type="PDB" id="6GSJ">
    <property type="method" value="X-ray"/>
    <property type="resolution" value="2.96 A"/>
    <property type="chains" value="D5/H8=1-206"/>
</dbReference>
<dbReference type="PDB" id="6GSK">
    <property type="method" value="X-ray"/>
    <property type="resolution" value="3.36 A"/>
    <property type="chains" value="D5/H8=1-206"/>
</dbReference>
<dbReference type="PDB" id="6GSL">
    <property type="method" value="X-ray"/>
    <property type="resolution" value="3.16 A"/>
    <property type="chains" value="D5/H8=1-206"/>
</dbReference>
<dbReference type="PDB" id="6GZQ">
    <property type="method" value="EM"/>
    <property type="resolution" value="3.28 A"/>
    <property type="chains" value="U1=1-179"/>
</dbReference>
<dbReference type="PDB" id="6GZX">
    <property type="method" value="EM"/>
    <property type="resolution" value="4.57 A"/>
    <property type="chains" value="U1/U2=1-179"/>
</dbReference>
<dbReference type="PDB" id="6GZZ">
    <property type="method" value="EM"/>
    <property type="resolution" value="4.13 A"/>
    <property type="chains" value="U1/U2=1-179"/>
</dbReference>
<dbReference type="PDB" id="6N9E">
    <property type="method" value="X-ray"/>
    <property type="resolution" value="3.70 A"/>
    <property type="chains" value="1Z/2Z=1-206"/>
</dbReference>
<dbReference type="PDB" id="6N9F">
    <property type="method" value="X-ray"/>
    <property type="resolution" value="3.70 A"/>
    <property type="chains" value="1Z/2Z=1-206"/>
</dbReference>
<dbReference type="PDB" id="6ND5">
    <property type="method" value="X-ray"/>
    <property type="resolution" value="2.60 A"/>
    <property type="chains" value="1Z/2Z=1-206"/>
</dbReference>
<dbReference type="PDB" id="6ND6">
    <property type="method" value="X-ray"/>
    <property type="resolution" value="2.85 A"/>
    <property type="chains" value="1Z/2Z=1-206"/>
</dbReference>
<dbReference type="PDB" id="6NDK">
    <property type="method" value="X-ray"/>
    <property type="resolution" value="3.64 A"/>
    <property type="chains" value="RZ/YZ=1-206"/>
</dbReference>
<dbReference type="PDB" id="6NSH">
    <property type="method" value="X-ray"/>
    <property type="resolution" value="3.40 A"/>
    <property type="chains" value="RZ/YZ=1-206"/>
</dbReference>
<dbReference type="PDB" id="6NTA">
    <property type="method" value="X-ray"/>
    <property type="resolution" value="3.10 A"/>
    <property type="chains" value="RZ/YZ=1-206"/>
</dbReference>
<dbReference type="PDB" id="6NUO">
    <property type="method" value="X-ray"/>
    <property type="resolution" value="3.20 A"/>
    <property type="chains" value="RZ/YZ=1-206"/>
</dbReference>
<dbReference type="PDB" id="6NWY">
    <property type="method" value="X-ray"/>
    <property type="resolution" value="3.50 A"/>
    <property type="chains" value="RZ/YZ=1-206"/>
</dbReference>
<dbReference type="PDB" id="6O3M">
    <property type="method" value="X-ray"/>
    <property type="resolution" value="3.97 A"/>
    <property type="chains" value="RZ/YZ=1-206"/>
</dbReference>
<dbReference type="PDB" id="6O97">
    <property type="method" value="X-ray"/>
    <property type="resolution" value="2.75 A"/>
    <property type="chains" value="1Z/2Z=1-206"/>
</dbReference>
<dbReference type="PDB" id="6OF1">
    <property type="method" value="X-ray"/>
    <property type="resolution" value="2.80 A"/>
    <property type="chains" value="1Z/2Z=1-206"/>
</dbReference>
<dbReference type="PDB" id="6OF6">
    <property type="method" value="X-ray"/>
    <property type="resolution" value="3.20 A"/>
    <property type="chains" value="RZ/YZ=1-206"/>
</dbReference>
<dbReference type="PDB" id="6OJ2">
    <property type="method" value="X-ray"/>
    <property type="resolution" value="3.20 A"/>
    <property type="chains" value="RZ/YZ=1-206"/>
</dbReference>
<dbReference type="PDB" id="6OPE">
    <property type="method" value="X-ray"/>
    <property type="resolution" value="3.10 A"/>
    <property type="chains" value="RZ/YZ=1-206"/>
</dbReference>
<dbReference type="PDB" id="6ORD">
    <property type="method" value="X-ray"/>
    <property type="resolution" value="3.10 A"/>
    <property type="chains" value="RZ/YZ=1-206"/>
</dbReference>
<dbReference type="PDB" id="6OSI">
    <property type="method" value="X-ray"/>
    <property type="resolution" value="4.14 A"/>
    <property type="chains" value="RZ/YZ=1-206"/>
</dbReference>
<dbReference type="PDB" id="6OTR">
    <property type="method" value="X-ray"/>
    <property type="resolution" value="3.12 A"/>
    <property type="chains" value="RZ/YZ=1-206"/>
</dbReference>
<dbReference type="PDB" id="6OXA">
    <property type="method" value="X-ray"/>
    <property type="resolution" value="3.25 A"/>
    <property type="chains" value="RZ/YZ=1-206"/>
</dbReference>
<dbReference type="PDB" id="6OXI">
    <property type="method" value="X-ray"/>
    <property type="resolution" value="3.50 A"/>
    <property type="chains" value="RZ/YZ=1-206"/>
</dbReference>
<dbReference type="PDB" id="6Q95">
    <property type="method" value="EM"/>
    <property type="resolution" value="3.70 A"/>
    <property type="chains" value="V=3-94"/>
</dbReference>
<dbReference type="PDB" id="6QNQ">
    <property type="method" value="X-ray"/>
    <property type="resolution" value="3.50 A"/>
    <property type="chains" value="D5/H8=1-206"/>
</dbReference>
<dbReference type="PDB" id="6QNR">
    <property type="method" value="X-ray"/>
    <property type="resolution" value="3.10 A"/>
    <property type="chains" value="D5/H8=1-206"/>
</dbReference>
<dbReference type="PDB" id="6UCQ">
    <property type="method" value="X-ray"/>
    <property type="resolution" value="3.50 A"/>
    <property type="chains" value="1Z/2Z=1-206"/>
</dbReference>
<dbReference type="PDB" id="6UO1">
    <property type="method" value="X-ray"/>
    <property type="resolution" value="2.95 A"/>
    <property type="chains" value="1Z/2Z=1-206"/>
</dbReference>
<dbReference type="PDB" id="6XHV">
    <property type="method" value="X-ray"/>
    <property type="resolution" value="2.40 A"/>
    <property type="chains" value="1Z/2Z=1-206"/>
</dbReference>
<dbReference type="PDB" id="6XHW">
    <property type="method" value="X-ray"/>
    <property type="resolution" value="2.50 A"/>
    <property type="chains" value="1Z/2Z=1-206"/>
</dbReference>
<dbReference type="PDB" id="6XHX">
    <property type="method" value="X-ray"/>
    <property type="resolution" value="2.55 A"/>
    <property type="chains" value="1Z/2Z=1-206"/>
</dbReference>
<dbReference type="PDB" id="6XHY">
    <property type="method" value="X-ray"/>
    <property type="resolution" value="2.60 A"/>
    <property type="chains" value="1Z/2Z=1-206"/>
</dbReference>
<dbReference type="PDB" id="6XQD">
    <property type="method" value="X-ray"/>
    <property type="resolution" value="2.80 A"/>
    <property type="chains" value="1Z/2Z=1-206"/>
</dbReference>
<dbReference type="PDB" id="6XQE">
    <property type="method" value="X-ray"/>
    <property type="resolution" value="3.00 A"/>
    <property type="chains" value="1Z/2Z=1-206"/>
</dbReference>
<dbReference type="PDB" id="7AZO">
    <property type="method" value="X-ray"/>
    <property type="resolution" value="3.30 A"/>
    <property type="chains" value="L25A/L25B=1-206"/>
</dbReference>
<dbReference type="PDB" id="7AZS">
    <property type="method" value="X-ray"/>
    <property type="resolution" value="3.10 A"/>
    <property type="chains" value="L25A/L25B=1-206"/>
</dbReference>
<dbReference type="PDB" id="7JQL">
    <property type="method" value="X-ray"/>
    <property type="resolution" value="3.00 A"/>
    <property type="chains" value="1Z/2Z=1-206"/>
</dbReference>
<dbReference type="PDB" id="7JQM">
    <property type="method" value="X-ray"/>
    <property type="resolution" value="3.05 A"/>
    <property type="chains" value="1Z/2Z=1-206"/>
</dbReference>
<dbReference type="PDB" id="7LH5">
    <property type="method" value="X-ray"/>
    <property type="resolution" value="3.27 A"/>
    <property type="chains" value="BZ/DZ=1-206"/>
</dbReference>
<dbReference type="PDB" id="7MD7">
    <property type="method" value="X-ray"/>
    <property type="resolution" value="2.80 A"/>
    <property type="chains" value="1Z/2Z=1-206"/>
</dbReference>
<dbReference type="PDB" id="7RQ8">
    <property type="method" value="X-ray"/>
    <property type="resolution" value="2.50 A"/>
    <property type="chains" value="1Z/2Z=1-206"/>
</dbReference>
<dbReference type="PDB" id="7RQ9">
    <property type="method" value="X-ray"/>
    <property type="resolution" value="2.60 A"/>
    <property type="chains" value="1Z/2Z=1-206"/>
</dbReference>
<dbReference type="PDB" id="7RQA">
    <property type="method" value="X-ray"/>
    <property type="resolution" value="2.40 A"/>
    <property type="chains" value="1Z/2Z=1-206"/>
</dbReference>
<dbReference type="PDB" id="7RQB">
    <property type="method" value="X-ray"/>
    <property type="resolution" value="2.45 A"/>
    <property type="chains" value="1Z/2Z=1-206"/>
</dbReference>
<dbReference type="PDB" id="7RQC">
    <property type="method" value="X-ray"/>
    <property type="resolution" value="2.50 A"/>
    <property type="chains" value="1Z/2Z=1-206"/>
</dbReference>
<dbReference type="PDB" id="7RQD">
    <property type="method" value="X-ray"/>
    <property type="resolution" value="2.50 A"/>
    <property type="chains" value="1Z/2Z=1-206"/>
</dbReference>
<dbReference type="PDB" id="7RQE">
    <property type="method" value="X-ray"/>
    <property type="resolution" value="2.40 A"/>
    <property type="chains" value="1Z/2Z=1-206"/>
</dbReference>
<dbReference type="PDB" id="7U2H">
    <property type="method" value="X-ray"/>
    <property type="resolution" value="2.55 A"/>
    <property type="chains" value="1Z/2Z=1-206"/>
</dbReference>
<dbReference type="PDB" id="7U2I">
    <property type="method" value="X-ray"/>
    <property type="resolution" value="2.55 A"/>
    <property type="chains" value="1Z/2Z=1-206"/>
</dbReference>
<dbReference type="PDB" id="7U2J">
    <property type="method" value="X-ray"/>
    <property type="resolution" value="2.55 A"/>
    <property type="chains" value="1Z/2Z=1-206"/>
</dbReference>
<dbReference type="PDB" id="8CVJ">
    <property type="method" value="X-ray"/>
    <property type="resolution" value="2.40 A"/>
    <property type="chains" value="1Z/2Z=1-206"/>
</dbReference>
<dbReference type="PDB" id="8CVK">
    <property type="method" value="X-ray"/>
    <property type="resolution" value="2.50 A"/>
    <property type="chains" value="1Z/2Z=1-206"/>
</dbReference>
<dbReference type="PDB" id="8CVL">
    <property type="method" value="X-ray"/>
    <property type="resolution" value="2.30 A"/>
    <property type="chains" value="1Z/2Z=1-206"/>
</dbReference>
<dbReference type="PDB" id="8EKB">
    <property type="method" value="X-ray"/>
    <property type="resolution" value="2.70 A"/>
    <property type="chains" value="1Z/2Z=1-206"/>
</dbReference>
<dbReference type="PDB" id="8EV6">
    <property type="method" value="X-ray"/>
    <property type="resolution" value="2.95 A"/>
    <property type="chains" value="1Z/2Z=1-206"/>
</dbReference>
<dbReference type="PDB" id="8EV7">
    <property type="method" value="X-ray"/>
    <property type="resolution" value="2.89 A"/>
    <property type="chains" value="1Z/2Z=1-206"/>
</dbReference>
<dbReference type="PDB" id="8FC1">
    <property type="method" value="X-ray"/>
    <property type="resolution" value="2.50 A"/>
    <property type="chains" value="1Z/2Z=1-206"/>
</dbReference>
<dbReference type="PDB" id="8FC2">
    <property type="method" value="X-ray"/>
    <property type="resolution" value="2.50 A"/>
    <property type="chains" value="1Z/2Z=1-206"/>
</dbReference>
<dbReference type="PDB" id="8FC3">
    <property type="method" value="X-ray"/>
    <property type="resolution" value="2.60 A"/>
    <property type="chains" value="1Z/2Z=1-206"/>
</dbReference>
<dbReference type="PDB" id="8FC4">
    <property type="method" value="X-ray"/>
    <property type="resolution" value="2.45 A"/>
    <property type="chains" value="1Z/2Z=1-206"/>
</dbReference>
<dbReference type="PDB" id="8FC5">
    <property type="method" value="X-ray"/>
    <property type="resolution" value="2.65 A"/>
    <property type="chains" value="1Z/2Z=1-206"/>
</dbReference>
<dbReference type="PDB" id="8FC6">
    <property type="method" value="X-ray"/>
    <property type="resolution" value="2.35 A"/>
    <property type="chains" value="1Z/2Z=1-206"/>
</dbReference>
<dbReference type="PDB" id="8FOM">
    <property type="method" value="X-ray"/>
    <property type="resolution" value="3.58 A"/>
    <property type="chains" value="RZ/YZ=1-206"/>
</dbReference>
<dbReference type="PDB" id="8FON">
    <property type="method" value="X-ray"/>
    <property type="resolution" value="3.64 A"/>
    <property type="chains" value="RZ/YZ=1-206"/>
</dbReference>
<dbReference type="PDB" id="8G29">
    <property type="method" value="X-ray"/>
    <property type="resolution" value="2.55 A"/>
    <property type="chains" value="1Z/2Z=1-206"/>
</dbReference>
<dbReference type="PDB" id="8G2A">
    <property type="method" value="X-ray"/>
    <property type="resolution" value="2.45 A"/>
    <property type="chains" value="1Z/2Z=1-206"/>
</dbReference>
<dbReference type="PDB" id="8G2B">
    <property type="method" value="X-ray"/>
    <property type="resolution" value="2.55 A"/>
    <property type="chains" value="1Z/2Z=1-206"/>
</dbReference>
<dbReference type="PDB" id="8G2C">
    <property type="method" value="X-ray"/>
    <property type="resolution" value="2.65 A"/>
    <property type="chains" value="1Z/2Z=1-206"/>
</dbReference>
<dbReference type="PDB" id="8G2D">
    <property type="method" value="X-ray"/>
    <property type="resolution" value="2.70 A"/>
    <property type="chains" value="1Z/2Z=1-206"/>
</dbReference>
<dbReference type="PDB" id="8T8B">
    <property type="method" value="X-ray"/>
    <property type="resolution" value="2.65 A"/>
    <property type="chains" value="1Z/2Z=1-206"/>
</dbReference>
<dbReference type="PDB" id="8T8C">
    <property type="method" value="X-ray"/>
    <property type="resolution" value="2.60 A"/>
    <property type="chains" value="1Z/2Z=1-206"/>
</dbReference>
<dbReference type="PDB" id="8UD6">
    <property type="method" value="X-ray"/>
    <property type="resolution" value="2.70 A"/>
    <property type="chains" value="1Z/2Z=1-206"/>
</dbReference>
<dbReference type="PDB" id="8UD7">
    <property type="method" value="X-ray"/>
    <property type="resolution" value="2.55 A"/>
    <property type="chains" value="1Z/2Z=1-206"/>
</dbReference>
<dbReference type="PDB" id="8UD8">
    <property type="method" value="X-ray"/>
    <property type="resolution" value="2.60 A"/>
    <property type="chains" value="1Z/2Z=1-206"/>
</dbReference>
<dbReference type="PDB" id="8UVR">
    <property type="method" value="X-ray"/>
    <property type="resolution" value="2.60 A"/>
    <property type="chains" value="1Z/2Z=1-206"/>
</dbReference>
<dbReference type="PDB" id="8UVS">
    <property type="method" value="X-ray"/>
    <property type="resolution" value="2.75 A"/>
    <property type="chains" value="1Z/2Z=1-206"/>
</dbReference>
<dbReference type="PDB" id="8VTU">
    <property type="method" value="X-ray"/>
    <property type="resolution" value="2.40 A"/>
    <property type="chains" value="1Z/2Z=1-206"/>
</dbReference>
<dbReference type="PDB" id="8VTV">
    <property type="method" value="X-ray"/>
    <property type="resolution" value="2.55 A"/>
    <property type="chains" value="1Z/2Z=1-206"/>
</dbReference>
<dbReference type="PDB" id="8VTW">
    <property type="method" value="X-ray"/>
    <property type="resolution" value="2.35 A"/>
    <property type="chains" value="1Z/2Z=1-206"/>
</dbReference>
<dbReference type="PDB" id="8VTX">
    <property type="method" value="X-ray"/>
    <property type="resolution" value="2.40 A"/>
    <property type="chains" value="1Z/2Z=1-206"/>
</dbReference>
<dbReference type="PDB" id="8VTY">
    <property type="method" value="X-ray"/>
    <property type="resolution" value="2.60 A"/>
    <property type="chains" value="1Z/2Z=1-206"/>
</dbReference>
<dbReference type="PDB" id="8WV1">
    <property type="method" value="X-ray"/>
    <property type="resolution" value="3.99 A"/>
    <property type="chains" value="U/u=1-206"/>
</dbReference>
<dbReference type="PDB" id="9B00">
    <property type="method" value="X-ray"/>
    <property type="resolution" value="2.80 A"/>
    <property type="chains" value="1Z/2Z=1-206"/>
</dbReference>
<dbReference type="PDB" id="9D0J">
    <property type="method" value="X-ray"/>
    <property type="resolution" value="2.50 A"/>
    <property type="chains" value="1Z/2Z=1-206"/>
</dbReference>
<dbReference type="PDB" id="9D7R">
    <property type="method" value="X-ray"/>
    <property type="resolution" value="2.70 A"/>
    <property type="chains" value="1Z/2Z=1-206"/>
</dbReference>
<dbReference type="PDB" id="9D7S">
    <property type="method" value="X-ray"/>
    <property type="resolution" value="2.85 A"/>
    <property type="chains" value="1Z/2Z=1-206"/>
</dbReference>
<dbReference type="PDB" id="9D7T">
    <property type="method" value="X-ray"/>
    <property type="resolution" value="2.70 A"/>
    <property type="chains" value="1Z/2Z=1-206"/>
</dbReference>
<dbReference type="PDB" id="9DFC">
    <property type="method" value="X-ray"/>
    <property type="resolution" value="2.50 A"/>
    <property type="chains" value="1Z/2Z=1-206"/>
</dbReference>
<dbReference type="PDB" id="9DFD">
    <property type="method" value="X-ray"/>
    <property type="resolution" value="2.60 A"/>
    <property type="chains" value="1Z/2Z=1-206"/>
</dbReference>
<dbReference type="PDB" id="9DFE">
    <property type="method" value="X-ray"/>
    <property type="resolution" value="2.60 A"/>
    <property type="chains" value="1Z/2Z=1-206"/>
</dbReference>
<dbReference type="PDBsum" id="1VVJ"/>
<dbReference type="PDBsum" id="1VY4"/>
<dbReference type="PDBsum" id="1VY5"/>
<dbReference type="PDBsum" id="1VY6"/>
<dbReference type="PDBsum" id="1VY7"/>
<dbReference type="PDBsum" id="4L47"/>
<dbReference type="PDBsum" id="4L71"/>
<dbReference type="PDBsum" id="4LEL"/>
<dbReference type="PDBsum" id="4LFZ"/>
<dbReference type="PDBsum" id="4LNT"/>
<dbReference type="PDBsum" id="4LSK"/>
<dbReference type="PDBsum" id="4LT8"/>
<dbReference type="PDBsum" id="4P6F"/>
<dbReference type="PDBsum" id="4P70"/>
<dbReference type="PDBsum" id="4TUA"/>
<dbReference type="PDBsum" id="4TUB"/>
<dbReference type="PDBsum" id="4TUC"/>
<dbReference type="PDBsum" id="4TUD"/>
<dbReference type="PDBsum" id="4TUE"/>
<dbReference type="PDBsum" id="4V42"/>
<dbReference type="PDBsum" id="4V4X"/>
<dbReference type="PDBsum" id="4V4Y"/>
<dbReference type="PDBsum" id="4V4Z"/>
<dbReference type="PDBsum" id="4V51"/>
<dbReference type="PDBsum" id="4V5A"/>
<dbReference type="PDBsum" id="4V5C"/>
<dbReference type="PDBsum" id="4V5D"/>
<dbReference type="PDBsum" id="4V5E"/>
<dbReference type="PDBsum" id="4V5F"/>
<dbReference type="PDBsum" id="4V5G"/>
<dbReference type="PDBsum" id="4V5J"/>
<dbReference type="PDBsum" id="4V5K"/>
<dbReference type="PDBsum" id="4V5L"/>
<dbReference type="PDBsum" id="4V5M"/>
<dbReference type="PDBsum" id="4V5N"/>
<dbReference type="PDBsum" id="4V5P"/>
<dbReference type="PDBsum" id="4V5Q"/>
<dbReference type="PDBsum" id="4V5R"/>
<dbReference type="PDBsum" id="4V5S"/>
<dbReference type="PDBsum" id="4V68"/>
<dbReference type="PDBsum" id="4V6A"/>
<dbReference type="PDBsum" id="4V6F"/>
<dbReference type="PDBsum" id="4V6G"/>
<dbReference type="PDBsum" id="4V7J"/>
<dbReference type="PDBsum" id="4V7K"/>
<dbReference type="PDBsum" id="4V7L"/>
<dbReference type="PDBsum" id="4V7M"/>
<dbReference type="PDBsum" id="4V7W"/>
<dbReference type="PDBsum" id="4V7X"/>
<dbReference type="PDBsum" id="4V7Y"/>
<dbReference type="PDBsum" id="4V7Z"/>
<dbReference type="PDBsum" id="4V87"/>
<dbReference type="PDBsum" id="4V8A"/>
<dbReference type="PDBsum" id="4V8B"/>
<dbReference type="PDBsum" id="4V8C"/>
<dbReference type="PDBsum" id="4V8D"/>
<dbReference type="PDBsum" id="4V8E"/>
<dbReference type="PDBsum" id="4V8F"/>
<dbReference type="PDBsum" id="4V8G"/>
<dbReference type="PDBsum" id="4V8H"/>
<dbReference type="PDBsum" id="4V8I"/>
<dbReference type="PDBsum" id="4V8J"/>
<dbReference type="PDBsum" id="4V8N"/>
<dbReference type="PDBsum" id="4V8O"/>
<dbReference type="PDBsum" id="4V8Q"/>
<dbReference type="PDBsum" id="4V8U"/>
<dbReference type="PDBsum" id="4V8X"/>
<dbReference type="PDBsum" id="4V90"/>
<dbReference type="PDBsum" id="4V95"/>
<dbReference type="PDBsum" id="4V97"/>
<dbReference type="PDBsum" id="4V9A"/>
<dbReference type="PDBsum" id="4V9B"/>
<dbReference type="PDBsum" id="4V9H"/>
<dbReference type="PDBsum" id="4V9I"/>
<dbReference type="PDBsum" id="4V9R"/>
<dbReference type="PDBsum" id="4V9S"/>
<dbReference type="PDBsum" id="4W2E"/>
<dbReference type="PDBsum" id="4W2F"/>
<dbReference type="PDBsum" id="4W2G"/>
<dbReference type="PDBsum" id="4W2H"/>
<dbReference type="PDBsum" id="4W2I"/>
<dbReference type="PDBsum" id="4W4G"/>
<dbReference type="PDBsum" id="4WPO"/>
<dbReference type="PDBsum" id="4WQ1"/>
<dbReference type="PDBsum" id="4WQF"/>
<dbReference type="PDBsum" id="4WQR"/>
<dbReference type="PDBsum" id="4WQU"/>
<dbReference type="PDBsum" id="4WQY"/>
<dbReference type="PDBsum" id="4WR6"/>
<dbReference type="PDBsum" id="4WRA"/>
<dbReference type="PDBsum" id="4WRO"/>
<dbReference type="PDBsum" id="4WSD"/>
<dbReference type="PDBsum" id="4WSM"/>
<dbReference type="PDBsum" id="4WT1"/>
<dbReference type="PDBsum" id="4WT8"/>
<dbReference type="PDBsum" id="4WU1"/>
<dbReference type="PDBsum" id="4WZD"/>
<dbReference type="PDBsum" id="4WZO"/>
<dbReference type="PDBsum" id="4Y4O"/>
<dbReference type="PDBsum" id="4Y4P"/>
<dbReference type="PDBsum" id="4YPB"/>
<dbReference type="PDBsum" id="4YZV"/>
<dbReference type="PDBsum" id="4Z3S"/>
<dbReference type="PDBsum" id="4Z8C"/>
<dbReference type="PDBsum" id="4ZER"/>
<dbReference type="PDBsum" id="4ZSN"/>
<dbReference type="PDBsum" id="5A9Z"/>
<dbReference type="PDBsum" id="5AA0"/>
<dbReference type="PDBsum" id="5CZP"/>
<dbReference type="PDBsum" id="5D8B"/>
<dbReference type="PDBsum" id="5DFE"/>
<dbReference type="PDBsum" id="5DOX"/>
<dbReference type="PDBsum" id="5DOY"/>
<dbReference type="PDBsum" id="5E7K"/>
<dbReference type="PDBsum" id="5E81"/>
<dbReference type="PDBsum" id="5EL4"/>
<dbReference type="PDBsum" id="5EL5"/>
<dbReference type="PDBsum" id="5EL6"/>
<dbReference type="PDBsum" id="5EL7"/>
<dbReference type="PDBsum" id="5F8K"/>
<dbReference type="PDBsum" id="5FDU"/>
<dbReference type="PDBsum" id="5FDV"/>
<dbReference type="PDBsum" id="5HAU"/>
<dbReference type="PDBsum" id="5HCP"/>
<dbReference type="PDBsum" id="5HCQ"/>
<dbReference type="PDBsum" id="5HCR"/>
<dbReference type="PDBsum" id="5HD1"/>
<dbReference type="PDBsum" id="5IB7"/>
<dbReference type="PDBsum" id="5IB8"/>
<dbReference type="PDBsum" id="5IBB"/>
<dbReference type="PDBsum" id="5IMQ"/>
<dbReference type="PDBsum" id="5IMR"/>
<dbReference type="PDBsum" id="5J30"/>
<dbReference type="PDBsum" id="5J3C"/>
<dbReference type="PDBsum" id="5J4B"/>
<dbReference type="PDBsum" id="5J4C"/>
<dbReference type="PDBsum" id="5J8B"/>
<dbReference type="PDBsum" id="5NDJ"/>
<dbReference type="PDBsum" id="5NDK"/>
<dbReference type="PDBsum" id="5OT7"/>
<dbReference type="PDBsum" id="5UQ7"/>
<dbReference type="PDBsum" id="5UQ8"/>
<dbReference type="PDBsum" id="5VP2"/>
<dbReference type="PDBsum" id="5VPO"/>
<dbReference type="PDBsum" id="5VPP"/>
<dbReference type="PDBsum" id="5W4K"/>
<dbReference type="PDBsum" id="5WIS"/>
<dbReference type="PDBsum" id="5WIT"/>
<dbReference type="PDBsum" id="5ZLU"/>
<dbReference type="PDBsum" id="6BUW"/>
<dbReference type="PDBsum" id="6BZ6"/>
<dbReference type="PDBsum" id="6BZ7"/>
<dbReference type="PDBsum" id="6BZ8"/>
<dbReference type="PDBsum" id="6C5L"/>
<dbReference type="PDBsum" id="6CAE"/>
<dbReference type="PDBsum" id="6CFJ"/>
<dbReference type="PDBsum" id="6CFK"/>
<dbReference type="PDBsum" id="6CFL"/>
<dbReference type="PDBsum" id="6CZR"/>
<dbReference type="PDBsum" id="6FKR"/>
<dbReference type="PDBsum" id="6GSJ"/>
<dbReference type="PDBsum" id="6GSK"/>
<dbReference type="PDBsum" id="6GSL"/>
<dbReference type="PDBsum" id="6GZQ"/>
<dbReference type="PDBsum" id="6GZX"/>
<dbReference type="PDBsum" id="6GZZ"/>
<dbReference type="PDBsum" id="6N9E"/>
<dbReference type="PDBsum" id="6N9F"/>
<dbReference type="PDBsum" id="6ND5"/>
<dbReference type="PDBsum" id="6ND6"/>
<dbReference type="PDBsum" id="6NDK"/>
<dbReference type="PDBsum" id="6NSH"/>
<dbReference type="PDBsum" id="6NTA"/>
<dbReference type="PDBsum" id="6NUO"/>
<dbReference type="PDBsum" id="6NWY"/>
<dbReference type="PDBsum" id="6O3M"/>
<dbReference type="PDBsum" id="6O97"/>
<dbReference type="PDBsum" id="6OF1"/>
<dbReference type="PDBsum" id="6OF6"/>
<dbReference type="PDBsum" id="6OJ2"/>
<dbReference type="PDBsum" id="6OPE"/>
<dbReference type="PDBsum" id="6ORD"/>
<dbReference type="PDBsum" id="6OSI"/>
<dbReference type="PDBsum" id="6OTR"/>
<dbReference type="PDBsum" id="6OXA"/>
<dbReference type="PDBsum" id="6OXI"/>
<dbReference type="PDBsum" id="6Q95"/>
<dbReference type="PDBsum" id="6QNQ"/>
<dbReference type="PDBsum" id="6QNR"/>
<dbReference type="PDBsum" id="6UCQ"/>
<dbReference type="PDBsum" id="6UO1"/>
<dbReference type="PDBsum" id="6XHV"/>
<dbReference type="PDBsum" id="6XHW"/>
<dbReference type="PDBsum" id="6XHX"/>
<dbReference type="PDBsum" id="6XHY"/>
<dbReference type="PDBsum" id="6XQD"/>
<dbReference type="PDBsum" id="6XQE"/>
<dbReference type="PDBsum" id="7AZO"/>
<dbReference type="PDBsum" id="7AZS"/>
<dbReference type="PDBsum" id="7JQL"/>
<dbReference type="PDBsum" id="7JQM"/>
<dbReference type="PDBsum" id="7LH5"/>
<dbReference type="PDBsum" id="7MD7"/>
<dbReference type="PDBsum" id="7RQ8"/>
<dbReference type="PDBsum" id="7RQ9"/>
<dbReference type="PDBsum" id="7RQA"/>
<dbReference type="PDBsum" id="7RQB"/>
<dbReference type="PDBsum" id="7RQC"/>
<dbReference type="PDBsum" id="7RQD"/>
<dbReference type="PDBsum" id="7RQE"/>
<dbReference type="PDBsum" id="7U2H"/>
<dbReference type="PDBsum" id="7U2I"/>
<dbReference type="PDBsum" id="7U2J"/>
<dbReference type="PDBsum" id="8CVJ"/>
<dbReference type="PDBsum" id="8CVK"/>
<dbReference type="PDBsum" id="8CVL"/>
<dbReference type="PDBsum" id="8EKB"/>
<dbReference type="PDBsum" id="8EV6"/>
<dbReference type="PDBsum" id="8EV7"/>
<dbReference type="PDBsum" id="8FC1"/>
<dbReference type="PDBsum" id="8FC2"/>
<dbReference type="PDBsum" id="8FC3"/>
<dbReference type="PDBsum" id="8FC4"/>
<dbReference type="PDBsum" id="8FC5"/>
<dbReference type="PDBsum" id="8FC6"/>
<dbReference type="PDBsum" id="8FOM"/>
<dbReference type="PDBsum" id="8FON"/>
<dbReference type="PDBsum" id="8G29"/>
<dbReference type="PDBsum" id="8G2A"/>
<dbReference type="PDBsum" id="8G2B"/>
<dbReference type="PDBsum" id="8G2C"/>
<dbReference type="PDBsum" id="8G2D"/>
<dbReference type="PDBsum" id="8T8B"/>
<dbReference type="PDBsum" id="8T8C"/>
<dbReference type="PDBsum" id="8UD6"/>
<dbReference type="PDBsum" id="8UD7"/>
<dbReference type="PDBsum" id="8UD8"/>
<dbReference type="PDBsum" id="8UVR"/>
<dbReference type="PDBsum" id="8UVS"/>
<dbReference type="PDBsum" id="8VTU"/>
<dbReference type="PDBsum" id="8VTV"/>
<dbReference type="PDBsum" id="8VTW"/>
<dbReference type="PDBsum" id="8VTX"/>
<dbReference type="PDBsum" id="8VTY"/>
<dbReference type="PDBsum" id="8WV1"/>
<dbReference type="PDBsum" id="9B00"/>
<dbReference type="PDBsum" id="9D0J"/>
<dbReference type="PDBsum" id="9D7R"/>
<dbReference type="PDBsum" id="9D7S"/>
<dbReference type="PDBsum" id="9D7T"/>
<dbReference type="PDBsum" id="9DFC"/>
<dbReference type="PDBsum" id="9DFD"/>
<dbReference type="PDBsum" id="9DFE"/>
<dbReference type="EMDB" id="EMD-0101"/>
<dbReference type="EMDB" id="EMD-0104"/>
<dbReference type="EMDB" id="EMD-0105"/>
<dbReference type="EMDB" id="EMD-3852"/>
<dbReference type="EMDB" id="EMD-4475"/>
<dbReference type="EMDB" id="EMD-6934"/>
<dbReference type="EMDB" id="EMD-8596"/>
<dbReference type="EMDB" id="EMD-8597"/>
<dbReference type="SMR" id="Q5SHZ1"/>
<dbReference type="IntAct" id="Q5SHZ1">
    <property type="interactions" value="7"/>
</dbReference>
<dbReference type="EnsemblBacteria" id="BAD71412">
    <property type="protein sequence ID" value="BAD71412"/>
    <property type="gene ID" value="BAD71412"/>
</dbReference>
<dbReference type="GeneID" id="3169859"/>
<dbReference type="KEGG" id="ttj:TTHA1589"/>
<dbReference type="PATRIC" id="fig|300852.9.peg.1559"/>
<dbReference type="eggNOG" id="COG1825">
    <property type="taxonomic scope" value="Bacteria"/>
</dbReference>
<dbReference type="HOGENOM" id="CLU_075939_2_0_0"/>
<dbReference type="PhylomeDB" id="Q5SHZ1"/>
<dbReference type="Proteomes" id="UP000000532">
    <property type="component" value="Chromosome"/>
</dbReference>
<dbReference type="GO" id="GO:0022625">
    <property type="term" value="C:cytosolic large ribosomal subunit"/>
    <property type="evidence" value="ECO:0007669"/>
    <property type="project" value="TreeGrafter"/>
</dbReference>
<dbReference type="GO" id="GO:0008097">
    <property type="term" value="F:5S rRNA binding"/>
    <property type="evidence" value="ECO:0007669"/>
    <property type="project" value="InterPro"/>
</dbReference>
<dbReference type="GO" id="GO:0003735">
    <property type="term" value="F:structural constituent of ribosome"/>
    <property type="evidence" value="ECO:0007669"/>
    <property type="project" value="InterPro"/>
</dbReference>
<dbReference type="GO" id="GO:0006412">
    <property type="term" value="P:translation"/>
    <property type="evidence" value="ECO:0007669"/>
    <property type="project" value="UniProtKB-UniRule"/>
</dbReference>
<dbReference type="CDD" id="cd00495">
    <property type="entry name" value="Ribosomal_L25_TL5_CTC"/>
    <property type="match status" value="1"/>
</dbReference>
<dbReference type="Gene3D" id="2.170.120.20">
    <property type="entry name" value="Ribosomal protein L25, beta domain"/>
    <property type="match status" value="1"/>
</dbReference>
<dbReference type="Gene3D" id="2.40.240.10">
    <property type="entry name" value="Ribosomal Protein L25, Chain P"/>
    <property type="match status" value="1"/>
</dbReference>
<dbReference type="HAMAP" id="MF_01334">
    <property type="entry name" value="Ribosomal_bL25_CTC"/>
    <property type="match status" value="1"/>
</dbReference>
<dbReference type="InterPro" id="IPR020056">
    <property type="entry name" value="Rbsml_bL25/Gln-tRNA_synth_N"/>
</dbReference>
<dbReference type="InterPro" id="IPR011035">
    <property type="entry name" value="Ribosomal_bL25/Gln-tRNA_synth"/>
</dbReference>
<dbReference type="InterPro" id="IPR020057">
    <property type="entry name" value="Ribosomal_bL25_b-dom"/>
</dbReference>
<dbReference type="InterPro" id="IPR037121">
    <property type="entry name" value="Ribosomal_bL25_C"/>
</dbReference>
<dbReference type="InterPro" id="IPR001021">
    <property type="entry name" value="Ribosomal_bL25_long"/>
</dbReference>
<dbReference type="InterPro" id="IPR029751">
    <property type="entry name" value="Ribosomal_L25_dom"/>
</dbReference>
<dbReference type="InterPro" id="IPR020930">
    <property type="entry name" value="Ribosomal_uL5_bac-type"/>
</dbReference>
<dbReference type="NCBIfam" id="TIGR00731">
    <property type="entry name" value="bL25_bact_ctc"/>
    <property type="match status" value="1"/>
</dbReference>
<dbReference type="PANTHER" id="PTHR33284">
    <property type="entry name" value="RIBOSOMAL PROTEIN L25/GLN-TRNA SYNTHETASE, ANTI-CODON-BINDING DOMAIN-CONTAINING PROTEIN"/>
    <property type="match status" value="1"/>
</dbReference>
<dbReference type="PANTHER" id="PTHR33284:SF1">
    <property type="entry name" value="RIBOSOMAL PROTEIN L25_GLN-TRNA SYNTHETASE, ANTI-CODON-BINDING DOMAIN-CONTAINING PROTEIN"/>
    <property type="match status" value="1"/>
</dbReference>
<dbReference type="Pfam" id="PF01386">
    <property type="entry name" value="Ribosomal_L25p"/>
    <property type="match status" value="1"/>
</dbReference>
<dbReference type="Pfam" id="PF14693">
    <property type="entry name" value="Ribosomal_TL5_C"/>
    <property type="match status" value="1"/>
</dbReference>
<dbReference type="SUPFAM" id="SSF50715">
    <property type="entry name" value="Ribosomal protein L25-like"/>
    <property type="match status" value="1"/>
</dbReference>
<gene>
    <name type="primary">rplY</name>
    <name type="synonym">rpl25</name>
    <name type="synonym">rptL5</name>
    <name type="ordered locus">TTHA1589</name>
</gene>
<organism>
    <name type="scientific">Thermus thermophilus (strain ATCC 27634 / DSM 579 / HB8)</name>
    <dbReference type="NCBI Taxonomy" id="300852"/>
    <lineage>
        <taxon>Bacteria</taxon>
        <taxon>Thermotogati</taxon>
        <taxon>Deinococcota</taxon>
        <taxon>Deinococci</taxon>
        <taxon>Thermales</taxon>
        <taxon>Thermaceae</taxon>
        <taxon>Thermus</taxon>
    </lineage>
</organism>
<evidence type="ECO:0000256" key="1">
    <source>
        <dbReference type="SAM" id="MobiDB-lite"/>
    </source>
</evidence>
<evidence type="ECO:0000269" key="2">
    <source>
    </source>
</evidence>
<evidence type="ECO:0000269" key="3">
    <source ref="4"/>
</evidence>
<evidence type="ECO:0000303" key="4">
    <source>
    </source>
</evidence>
<evidence type="ECO:0000305" key="5"/>
<evidence type="ECO:0007829" key="6">
    <source>
        <dbReference type="PDB" id="4WT8"/>
    </source>
</evidence>
<reference key="1">
    <citation type="submission" date="2004-11" db="EMBL/GenBank/DDBJ databases">
        <title>Complete genome sequence of Thermus thermophilus HB8.</title>
        <authorList>
            <person name="Masui R."/>
            <person name="Kurokawa K."/>
            <person name="Nakagawa N."/>
            <person name="Tokunaga F."/>
            <person name="Koyama Y."/>
            <person name="Shibata T."/>
            <person name="Oshima T."/>
            <person name="Yokoyama S."/>
            <person name="Yasunaga T."/>
            <person name="Kuramitsu S."/>
        </authorList>
    </citation>
    <scope>NUCLEOTIDE SEQUENCE [LARGE SCALE GENOMIC DNA]</scope>
    <source>
        <strain>ATCC 27634 / DSM 579 / HB8</strain>
    </source>
</reference>
<reference key="2">
    <citation type="journal article" date="1995" name="Endocyt. Cell Res.">
        <title>The isolation and complete amino acid sequence of the ribosomal protein L36 from Thermus thermophilus and its zinc-binding motif.</title>
        <authorList>
            <person name="Boysen R.I."/>
            <person name="Lorenz S."/>
            <person name="Kim J.S."/>
            <person name="Schroeder W.F.K.J."/>
            <person name="Erdmann V.A."/>
        </authorList>
    </citation>
    <scope>PROTEIN SEQUENCE OF 1-70</scope>
</reference>
<reference key="3">
    <citation type="journal article" date="2000" name="Biol. Chem.">
        <title>Identification of the 50S ribosomal proteins from the eubacterium Thermus thermophilus.</title>
        <authorList>
            <person name="Katsani K.R."/>
            <person name="Tsiboli P."/>
            <person name="Anagnostopoulos K."/>
            <person name="Urlaub H."/>
            <person name="Choli-Papadopoulou T."/>
        </authorList>
    </citation>
    <scope>PROTEIN SEQUENCE OF 1-30</scope>
    <source>
        <strain>ATCC 27634 / DSM 579 / HB8</strain>
    </source>
</reference>
<reference key="4">
    <citation type="journal article" date="1996" name="Endocyt. Cell Res.">
        <title>Identification, purification and partial sequence of four Thermus thermophilus 5S rRNA binding proteins.</title>
        <authorList>
            <person name="Kim J.-S."/>
            <person name="Boysen R.I."/>
            <person name="Schroeder W."/>
            <person name="Erdmann V.A."/>
            <person name="Gessner R.V."/>
        </authorList>
    </citation>
    <scope>PROTEIN SEQUENCE OF 1-22</scope>
    <scope>ISOLATION OF 5S RRNA-ASSOCIATED COMPLEXES</scope>
</reference>
<reference key="5">
    <citation type="journal article" date="2005" name="Proteomics">
        <title>Extending ribosomal protein identifications to unsequenced bacterial strains using matrix-assisted laser desorption/ionization mass spectrometry.</title>
        <authorList>
            <person name="Suh M.-J."/>
            <person name="Hamburg D.M."/>
            <person name="Gregory S.T."/>
            <person name="Dahlberg A.E."/>
            <person name="Limbach P.A."/>
        </authorList>
    </citation>
    <scope>MASS SPECTROMETRY</scope>
    <source>
        <strain>ATCC 27634 / DSM 579 / HB8</strain>
    </source>
</reference>
<reference key="6">
    <citation type="journal article" date="2001" name="Cell">
        <title>The path of messenger RNA through the ribosome.</title>
        <authorList>
            <person name="Yusupova G.Z."/>
            <person name="Yusupov M.M."/>
            <person name="Cate J.H.D."/>
            <person name="Noller H.F."/>
        </authorList>
    </citation>
    <scope>X-RAY CRYSTALLOGRAPHY (5.0 ANGSTROMS) OF THE RIBOSOME</scope>
</reference>
<reference key="7">
    <citation type="journal article" date="2001" name="Science">
        <title>Crystal structure of the ribosome at 5.5 A resolution.</title>
        <authorList>
            <person name="Yusupov M.M."/>
            <person name="Yusupova G.Z."/>
            <person name="Baucom A."/>
            <person name="Lieberman K."/>
            <person name="Earnest T.N."/>
            <person name="Cate J.H.D."/>
            <person name="Noller H.F."/>
        </authorList>
    </citation>
    <scope>X-RAY CRYSTALLOGRAPHY (5.5 ANGSTROMS) OF THE RIBOSOME</scope>
</reference>
<reference key="8">
    <citation type="journal article" date="2008" name="Science">
        <title>Insights into translational termination from the structure of RF2 bound to the ribosome.</title>
        <authorList>
            <person name="Weixlbaumer A."/>
            <person name="Jin H."/>
            <person name="Neubauer C."/>
            <person name="Voorhees R.M."/>
            <person name="Petry S."/>
            <person name="Kelley A.C."/>
            <person name="Ramakrishnan V."/>
        </authorList>
    </citation>
    <scope>X-RAY CRYSTALLOGRAPHY (3.45 ANGSTROMS) OF 70S RIBOSOME IN COMPLEX WITH RF2</scope>
    <scope>SUBUNIT</scope>
</reference>
<reference key="9">
    <citation type="journal article" date="2010" name="Proc. Natl. Acad. Sci. U.S.A.">
        <title>Structure of the 70S ribosome bound to release factor 2 and a substrate analog provides insights into catalysis of peptide release.</title>
        <authorList>
            <person name="Jin H."/>
            <person name="Kelley A.C."/>
            <person name="Loakes D."/>
            <person name="Ramakrishnan V."/>
        </authorList>
    </citation>
    <scope>X-RAY CRYSTALLOGRAPHY (3.10 ANGSTROMS) OF 70S RIBOSOME IN COMPLEX WITH RF2</scope>
    <scope>SUBUNIT</scope>
</reference>
<name>RL25_THET8</name>
<sequence>MEYRLKAYYREGEKPSALRRAGKLPGVMYNRHLNRKVYVDLVEFDKVFRQASIHHVIVLELPDGQSLPTLVRQVNLDKRRRRPEHVDFFVLSDEPVEMYVPLRFVGTPAGVRAGGVLQEIHRDILVKVSPRNIPEFIEVDVSGLEIGDSLHASDLKLPPGVELAVSPEETIAAVVPPEDVEKLAEEAAAEVAEPEVIKKGKEEEEE</sequence>
<feature type="chain" id="PRO_0000181608" description="Large ribosomal subunit protein bL25">
    <location>
        <begin position="1"/>
        <end position="206"/>
    </location>
</feature>
<feature type="region of interest" description="Disordered" evidence="1">
    <location>
        <begin position="184"/>
        <end position="206"/>
    </location>
</feature>
<feature type="compositionally biased region" description="Basic and acidic residues" evidence="1">
    <location>
        <begin position="195"/>
        <end position="206"/>
    </location>
</feature>
<feature type="sequence conflict" description="In Ref. 2; AA sequence." evidence="5" ref="2">
    <original>EFD</original>
    <variation>QRF</variation>
    <location>
        <begin position="43"/>
        <end position="45"/>
    </location>
</feature>
<feature type="sequence conflict" description="In Ref. 2; AA sequence." evidence="5" ref="2">
    <original>ELPDGQSLPTL</original>
    <variation>QLRRGTRLSPE</variation>
    <location>
        <begin position="60"/>
        <end position="70"/>
    </location>
</feature>
<feature type="strand" evidence="6">
    <location>
        <begin position="4"/>
        <end position="6"/>
    </location>
</feature>
<feature type="helix" evidence="6">
    <location>
        <begin position="15"/>
        <end position="20"/>
    </location>
</feature>
<feature type="strand" evidence="6">
    <location>
        <begin position="26"/>
        <end position="29"/>
    </location>
</feature>
<feature type="strand" evidence="6">
    <location>
        <begin position="34"/>
        <end position="37"/>
    </location>
</feature>
<feature type="helix" evidence="6">
    <location>
        <begin position="41"/>
        <end position="50"/>
    </location>
</feature>
<feature type="strand" evidence="6">
    <location>
        <begin position="51"/>
        <end position="55"/>
    </location>
</feature>
<feature type="strand" evidence="6">
    <location>
        <begin position="57"/>
        <end position="60"/>
    </location>
</feature>
<feature type="strand" evidence="6">
    <location>
        <begin position="66"/>
        <end position="75"/>
    </location>
</feature>
<feature type="strand" evidence="6">
    <location>
        <begin position="78"/>
        <end position="80"/>
    </location>
</feature>
<feature type="strand" evidence="6">
    <location>
        <begin position="85"/>
        <end position="90"/>
    </location>
</feature>
<feature type="strand" evidence="6">
    <location>
        <begin position="92"/>
        <end position="94"/>
    </location>
</feature>
<feature type="strand" evidence="6">
    <location>
        <begin position="97"/>
        <end position="101"/>
    </location>
</feature>
<feature type="strand" evidence="6">
    <location>
        <begin position="104"/>
        <end position="106"/>
    </location>
</feature>
<feature type="turn" evidence="6">
    <location>
        <begin position="110"/>
        <end position="112"/>
    </location>
</feature>
<feature type="strand" evidence="6">
    <location>
        <begin position="116"/>
        <end position="118"/>
    </location>
</feature>
<feature type="strand" evidence="6">
    <location>
        <begin position="122"/>
        <end position="127"/>
    </location>
</feature>
<feature type="helix" evidence="6">
    <location>
        <begin position="130"/>
        <end position="132"/>
    </location>
</feature>
<feature type="strand" evidence="6">
    <location>
        <begin position="139"/>
        <end position="143"/>
    </location>
</feature>
<feature type="strand" evidence="6">
    <location>
        <begin position="151"/>
        <end position="153"/>
    </location>
</feature>
<feature type="strand" evidence="6">
    <location>
        <begin position="173"/>
        <end position="175"/>
    </location>
</feature>
<proteinExistence type="evidence at protein level"/>